<comment type="similarity">
    <text evidence="1">Belongs to the bacterial ribosomal protein bL33 family.</text>
</comment>
<organism>
    <name type="scientific">Escherichia coli (strain SE11)</name>
    <dbReference type="NCBI Taxonomy" id="409438"/>
    <lineage>
        <taxon>Bacteria</taxon>
        <taxon>Pseudomonadati</taxon>
        <taxon>Pseudomonadota</taxon>
        <taxon>Gammaproteobacteria</taxon>
        <taxon>Enterobacterales</taxon>
        <taxon>Enterobacteriaceae</taxon>
        <taxon>Escherichia</taxon>
    </lineage>
</organism>
<feature type="chain" id="PRO_1000115131" description="Large ribosomal subunit protein bL33">
    <location>
        <begin position="1"/>
        <end position="55"/>
    </location>
</feature>
<name>RL33_ECOSE</name>
<sequence length="55" mass="6372">MAKGIREKIKLVSSAGTGHFYTTTKNKRTKPEKLELKKFDPVVRQHVIYKEAKIK</sequence>
<accession>B6I3L3</accession>
<protein>
    <recommendedName>
        <fullName evidence="1">Large ribosomal subunit protein bL33</fullName>
    </recommendedName>
    <alternativeName>
        <fullName evidence="2">50S ribosomal protein L33</fullName>
    </alternativeName>
</protein>
<keyword id="KW-0687">Ribonucleoprotein</keyword>
<keyword id="KW-0689">Ribosomal protein</keyword>
<reference key="1">
    <citation type="journal article" date="2008" name="DNA Res.">
        <title>Complete genome sequence and comparative analysis of the wild-type commensal Escherichia coli strain SE11 isolated from a healthy adult.</title>
        <authorList>
            <person name="Oshima K."/>
            <person name="Toh H."/>
            <person name="Ogura Y."/>
            <person name="Sasamoto H."/>
            <person name="Morita H."/>
            <person name="Park S.-H."/>
            <person name="Ooka T."/>
            <person name="Iyoda S."/>
            <person name="Taylor T.D."/>
            <person name="Hayashi T."/>
            <person name="Itoh K."/>
            <person name="Hattori M."/>
        </authorList>
    </citation>
    <scope>NUCLEOTIDE SEQUENCE [LARGE SCALE GENOMIC DNA]</scope>
    <source>
        <strain>SE11</strain>
    </source>
</reference>
<dbReference type="EMBL" id="AP009240">
    <property type="protein sequence ID" value="BAG79440.1"/>
    <property type="molecule type" value="Genomic_DNA"/>
</dbReference>
<dbReference type="RefSeq" id="WP_001051798.1">
    <property type="nucleotide sequence ID" value="NC_011415.1"/>
</dbReference>
<dbReference type="SMR" id="B6I3L3"/>
<dbReference type="GeneID" id="97607673"/>
<dbReference type="KEGG" id="ecy:ECSE_3916"/>
<dbReference type="HOGENOM" id="CLU_190949_1_1_6"/>
<dbReference type="Proteomes" id="UP000008199">
    <property type="component" value="Chromosome"/>
</dbReference>
<dbReference type="GO" id="GO:0022625">
    <property type="term" value="C:cytosolic large ribosomal subunit"/>
    <property type="evidence" value="ECO:0007669"/>
    <property type="project" value="TreeGrafter"/>
</dbReference>
<dbReference type="GO" id="GO:0003735">
    <property type="term" value="F:structural constituent of ribosome"/>
    <property type="evidence" value="ECO:0007669"/>
    <property type="project" value="InterPro"/>
</dbReference>
<dbReference type="GO" id="GO:0006412">
    <property type="term" value="P:translation"/>
    <property type="evidence" value="ECO:0007669"/>
    <property type="project" value="UniProtKB-UniRule"/>
</dbReference>
<dbReference type="FunFam" id="2.20.28.120:FF:000001">
    <property type="entry name" value="50S ribosomal protein L33"/>
    <property type="match status" value="1"/>
</dbReference>
<dbReference type="Gene3D" id="2.20.28.120">
    <property type="entry name" value="Ribosomal protein L33"/>
    <property type="match status" value="1"/>
</dbReference>
<dbReference type="HAMAP" id="MF_00294">
    <property type="entry name" value="Ribosomal_bL33"/>
    <property type="match status" value="1"/>
</dbReference>
<dbReference type="InterPro" id="IPR001705">
    <property type="entry name" value="Ribosomal_bL33"/>
</dbReference>
<dbReference type="InterPro" id="IPR018264">
    <property type="entry name" value="Ribosomal_bL33_CS"/>
</dbReference>
<dbReference type="InterPro" id="IPR038584">
    <property type="entry name" value="Ribosomal_bL33_sf"/>
</dbReference>
<dbReference type="InterPro" id="IPR011332">
    <property type="entry name" value="Ribosomal_zn-bd"/>
</dbReference>
<dbReference type="NCBIfam" id="NF001860">
    <property type="entry name" value="PRK00595.1"/>
    <property type="match status" value="1"/>
</dbReference>
<dbReference type="NCBIfam" id="TIGR01023">
    <property type="entry name" value="rpmG_bact"/>
    <property type="match status" value="1"/>
</dbReference>
<dbReference type="PANTHER" id="PTHR15238">
    <property type="entry name" value="54S RIBOSOMAL PROTEIN L39, MITOCHONDRIAL"/>
    <property type="match status" value="1"/>
</dbReference>
<dbReference type="PANTHER" id="PTHR15238:SF1">
    <property type="entry name" value="LARGE RIBOSOMAL SUBUNIT PROTEIN BL33M"/>
    <property type="match status" value="1"/>
</dbReference>
<dbReference type="Pfam" id="PF00471">
    <property type="entry name" value="Ribosomal_L33"/>
    <property type="match status" value="1"/>
</dbReference>
<dbReference type="SUPFAM" id="SSF57829">
    <property type="entry name" value="Zn-binding ribosomal proteins"/>
    <property type="match status" value="1"/>
</dbReference>
<dbReference type="PROSITE" id="PS00582">
    <property type="entry name" value="RIBOSOMAL_L33"/>
    <property type="match status" value="1"/>
</dbReference>
<gene>
    <name evidence="1" type="primary">rpmG</name>
    <name type="ordered locus">ECSE_3916</name>
</gene>
<proteinExistence type="inferred from homology"/>
<evidence type="ECO:0000255" key="1">
    <source>
        <dbReference type="HAMAP-Rule" id="MF_00294"/>
    </source>
</evidence>
<evidence type="ECO:0000305" key="2"/>